<sequence>MGGLLIKQLSTEEDRVVVIRFGHDYNPECMKQDDILASIAEKVKNMAVIYVVDITEVPDLNSMYELYDDCPTMFFYRNKHIMVDLGTGNNNKINWALTNKQDMIDIIETVYKGARKGKGLVNSPRDFSPQYKFLKKKKKKKNKKKQKKKIKKIKKKIKNN</sequence>
<proteinExistence type="inferred from homology"/>
<accession>Q553S5</accession>
<organism>
    <name type="scientific">Dictyostelium discoideum</name>
    <name type="common">Social amoeba</name>
    <dbReference type="NCBI Taxonomy" id="44689"/>
    <lineage>
        <taxon>Eukaryota</taxon>
        <taxon>Amoebozoa</taxon>
        <taxon>Evosea</taxon>
        <taxon>Eumycetozoa</taxon>
        <taxon>Dictyostelia</taxon>
        <taxon>Dictyosteliales</taxon>
        <taxon>Dictyosteliaceae</taxon>
        <taxon>Dictyostelium</taxon>
    </lineage>
</organism>
<comment type="function">
    <text evidence="1">Plays a role in pre-mRNA splicing as component of the U5 snRNP and U4/U6-U5 tri-snRNP complexes that are involved in spliceosome assembly, and as component of the precatalytic spliceosome (spliceosome B complex).</text>
</comment>
<comment type="subunit">
    <text evidence="1">Component of the precatalytic spliceosome (spliceosome B complex). Component of the U5 snRNP complex. Component of the U4/U6-U5 tri-snRNP complex.</text>
</comment>
<comment type="subcellular location">
    <subcellularLocation>
        <location evidence="1">Nucleus</location>
    </subcellularLocation>
</comment>
<comment type="similarity">
    <text evidence="3">Belongs to the DIM1 family.</text>
</comment>
<comment type="sequence caution" evidence="3">
    <conflict type="erroneous gene model prediction">
        <sequence resource="EMBL-CDS" id="EAL69769"/>
    </conflict>
</comment>
<keyword id="KW-0507">mRNA processing</keyword>
<keyword id="KW-0508">mRNA splicing</keyword>
<keyword id="KW-0539">Nucleus</keyword>
<keyword id="KW-1185">Reference proteome</keyword>
<keyword id="KW-0747">Spliceosome</keyword>
<feature type="chain" id="PRO_0000331292" description="Thioredoxin-like protein 4A homolog">
    <location>
        <begin position="1"/>
        <end position="160"/>
    </location>
</feature>
<feature type="region of interest" description="Disordered" evidence="2">
    <location>
        <begin position="132"/>
        <end position="160"/>
    </location>
</feature>
<feature type="compositionally biased region" description="Basic residues" evidence="2">
    <location>
        <begin position="133"/>
        <end position="160"/>
    </location>
</feature>
<dbReference type="EMBL" id="AAFI02000013">
    <property type="protein sequence ID" value="EAL69769.3"/>
    <property type="status" value="ALT_SEQ"/>
    <property type="molecule type" value="Genomic_DNA"/>
</dbReference>
<dbReference type="RefSeq" id="XP_643678.5">
    <property type="nucleotide sequence ID" value="XM_638586.4"/>
</dbReference>
<dbReference type="SMR" id="Q553S5"/>
<dbReference type="FunCoup" id="Q553S5">
    <property type="interactions" value="953"/>
</dbReference>
<dbReference type="STRING" id="44689.Q553S5"/>
<dbReference type="PaxDb" id="44689-DDB0233510"/>
<dbReference type="GeneID" id="8619945"/>
<dbReference type="KEGG" id="ddi:DDB_G0275407"/>
<dbReference type="dictyBase" id="DDB_G0275407">
    <property type="gene designation" value="txnl4a"/>
</dbReference>
<dbReference type="VEuPathDB" id="AmoebaDB:DDB_G0275407"/>
<dbReference type="eggNOG" id="KOG3414">
    <property type="taxonomic scope" value="Eukaryota"/>
</dbReference>
<dbReference type="InParanoid" id="Q553S5"/>
<dbReference type="PhylomeDB" id="Q553S5"/>
<dbReference type="PRO" id="PR:Q553S5"/>
<dbReference type="Proteomes" id="UP000002195">
    <property type="component" value="Chromosome 2"/>
</dbReference>
<dbReference type="GO" id="GO:0005634">
    <property type="term" value="C:nucleus"/>
    <property type="evidence" value="ECO:0000250"/>
    <property type="project" value="UniProtKB"/>
</dbReference>
<dbReference type="GO" id="GO:0005681">
    <property type="term" value="C:spliceosomal complex"/>
    <property type="evidence" value="ECO:0000318"/>
    <property type="project" value="GO_Central"/>
</dbReference>
<dbReference type="GO" id="GO:0046540">
    <property type="term" value="C:U4/U6 x U5 tri-snRNP complex"/>
    <property type="evidence" value="ECO:0000250"/>
    <property type="project" value="UniProtKB"/>
</dbReference>
<dbReference type="GO" id="GO:0005682">
    <property type="term" value="C:U5 snRNP"/>
    <property type="evidence" value="ECO:0000250"/>
    <property type="project" value="dictyBase"/>
</dbReference>
<dbReference type="GO" id="GO:0000398">
    <property type="term" value="P:mRNA splicing, via spliceosome"/>
    <property type="evidence" value="ECO:0000250"/>
    <property type="project" value="UniProtKB"/>
</dbReference>
<dbReference type="CDD" id="cd02954">
    <property type="entry name" value="DIM1"/>
    <property type="match status" value="1"/>
</dbReference>
<dbReference type="FunFam" id="3.40.30.10:FF:000004">
    <property type="entry name" value="Spliceosomal protein DIB1"/>
    <property type="match status" value="1"/>
</dbReference>
<dbReference type="Gene3D" id="3.40.30.10">
    <property type="entry name" value="Glutaredoxin"/>
    <property type="match status" value="1"/>
</dbReference>
<dbReference type="InterPro" id="IPR004123">
    <property type="entry name" value="Dim1"/>
</dbReference>
<dbReference type="InterPro" id="IPR036249">
    <property type="entry name" value="Thioredoxin-like_sf"/>
</dbReference>
<dbReference type="PANTHER" id="PTHR12052:SF5">
    <property type="entry name" value="THIOREDOXIN-LIKE PROTEIN 4A"/>
    <property type="match status" value="1"/>
</dbReference>
<dbReference type="PANTHER" id="PTHR12052">
    <property type="entry name" value="THIOREDOXIN-LIKE PROTEN 4A, 4B"/>
    <property type="match status" value="1"/>
</dbReference>
<dbReference type="Pfam" id="PF02966">
    <property type="entry name" value="DIM1"/>
    <property type="match status" value="1"/>
</dbReference>
<dbReference type="SMART" id="SM01410">
    <property type="entry name" value="DIM1"/>
    <property type="match status" value="1"/>
</dbReference>
<dbReference type="SUPFAM" id="SSF52833">
    <property type="entry name" value="Thioredoxin-like"/>
    <property type="match status" value="1"/>
</dbReference>
<evidence type="ECO:0000250" key="1">
    <source>
        <dbReference type="UniProtKB" id="P83876"/>
    </source>
</evidence>
<evidence type="ECO:0000256" key="2">
    <source>
        <dbReference type="SAM" id="MobiDB-lite"/>
    </source>
</evidence>
<evidence type="ECO:0000305" key="3"/>
<gene>
    <name type="primary">txnl4a</name>
    <name type="ORF">DDB_G0275407</name>
</gene>
<reference key="1">
    <citation type="journal article" date="2002" name="Nature">
        <title>Sequence and analysis of chromosome 2 of Dictyostelium discoideum.</title>
        <authorList>
            <person name="Gloeckner G."/>
            <person name="Eichinger L."/>
            <person name="Szafranski K."/>
            <person name="Pachebat J.A."/>
            <person name="Bankier A.T."/>
            <person name="Dear P.H."/>
            <person name="Lehmann R."/>
            <person name="Baumgart C."/>
            <person name="Parra G."/>
            <person name="Abril J.F."/>
            <person name="Guigo R."/>
            <person name="Kumpf K."/>
            <person name="Tunggal B."/>
            <person name="Cox E.C."/>
            <person name="Quail M.A."/>
            <person name="Platzer M."/>
            <person name="Rosenthal A."/>
            <person name="Noegel A.A."/>
        </authorList>
    </citation>
    <scope>NUCLEOTIDE SEQUENCE [LARGE SCALE GENOMIC DNA]</scope>
    <source>
        <strain>AX4</strain>
    </source>
</reference>
<reference key="2">
    <citation type="journal article" date="2005" name="Nature">
        <title>The genome of the social amoeba Dictyostelium discoideum.</title>
        <authorList>
            <person name="Eichinger L."/>
            <person name="Pachebat J.A."/>
            <person name="Gloeckner G."/>
            <person name="Rajandream M.A."/>
            <person name="Sucgang R."/>
            <person name="Berriman M."/>
            <person name="Song J."/>
            <person name="Olsen R."/>
            <person name="Szafranski K."/>
            <person name="Xu Q."/>
            <person name="Tunggal B."/>
            <person name="Kummerfeld S."/>
            <person name="Madera M."/>
            <person name="Konfortov B.A."/>
            <person name="Rivero F."/>
            <person name="Bankier A.T."/>
            <person name="Lehmann R."/>
            <person name="Hamlin N."/>
            <person name="Davies R."/>
            <person name="Gaudet P."/>
            <person name="Fey P."/>
            <person name="Pilcher K."/>
            <person name="Chen G."/>
            <person name="Saunders D."/>
            <person name="Sodergren E.J."/>
            <person name="Davis P."/>
            <person name="Kerhornou A."/>
            <person name="Nie X."/>
            <person name="Hall N."/>
            <person name="Anjard C."/>
            <person name="Hemphill L."/>
            <person name="Bason N."/>
            <person name="Farbrother P."/>
            <person name="Desany B."/>
            <person name="Just E."/>
            <person name="Morio T."/>
            <person name="Rost R."/>
            <person name="Churcher C.M."/>
            <person name="Cooper J."/>
            <person name="Haydock S."/>
            <person name="van Driessche N."/>
            <person name="Cronin A."/>
            <person name="Goodhead I."/>
            <person name="Muzny D.M."/>
            <person name="Mourier T."/>
            <person name="Pain A."/>
            <person name="Lu M."/>
            <person name="Harper D."/>
            <person name="Lindsay R."/>
            <person name="Hauser H."/>
            <person name="James K.D."/>
            <person name="Quiles M."/>
            <person name="Madan Babu M."/>
            <person name="Saito T."/>
            <person name="Buchrieser C."/>
            <person name="Wardroper A."/>
            <person name="Felder M."/>
            <person name="Thangavelu M."/>
            <person name="Johnson D."/>
            <person name="Knights A."/>
            <person name="Loulseged H."/>
            <person name="Mungall K.L."/>
            <person name="Oliver K."/>
            <person name="Price C."/>
            <person name="Quail M.A."/>
            <person name="Urushihara H."/>
            <person name="Hernandez J."/>
            <person name="Rabbinowitsch E."/>
            <person name="Steffen D."/>
            <person name="Sanders M."/>
            <person name="Ma J."/>
            <person name="Kohara Y."/>
            <person name="Sharp S."/>
            <person name="Simmonds M.N."/>
            <person name="Spiegler S."/>
            <person name="Tivey A."/>
            <person name="Sugano S."/>
            <person name="White B."/>
            <person name="Walker D."/>
            <person name="Woodward J.R."/>
            <person name="Winckler T."/>
            <person name="Tanaka Y."/>
            <person name="Shaulsky G."/>
            <person name="Schleicher M."/>
            <person name="Weinstock G.M."/>
            <person name="Rosenthal A."/>
            <person name="Cox E.C."/>
            <person name="Chisholm R.L."/>
            <person name="Gibbs R.A."/>
            <person name="Loomis W.F."/>
            <person name="Platzer M."/>
            <person name="Kay R.R."/>
            <person name="Williams J.G."/>
            <person name="Dear P.H."/>
            <person name="Noegel A.A."/>
            <person name="Barrell B.G."/>
            <person name="Kuspa A."/>
        </authorList>
    </citation>
    <scope>NUCLEOTIDE SEQUENCE [LARGE SCALE GENOMIC DNA]</scope>
    <source>
        <strain>AX4</strain>
    </source>
</reference>
<name>TXN4A_DICDI</name>
<protein>
    <recommendedName>
        <fullName>Thioredoxin-like protein 4A homolog</fullName>
    </recommendedName>
</protein>